<accession>O82088</accession>
<dbReference type="EMBL" id="U84140">
    <property type="protein sequence ID" value="AAC26161.1"/>
    <property type="molecule type" value="mRNA"/>
</dbReference>
<dbReference type="PIR" id="T07877">
    <property type="entry name" value="T07877"/>
</dbReference>
<dbReference type="SMR" id="O82088"/>
<dbReference type="BioGRID" id="2310449">
    <property type="interactions" value="5"/>
</dbReference>
<dbReference type="FunCoup" id="O82088">
    <property type="interactions" value="692"/>
</dbReference>
<dbReference type="STRING" id="4081.O82088"/>
<dbReference type="PaxDb" id="4081-Solyc06g074350.2.1"/>
<dbReference type="eggNOG" id="KOG3346">
    <property type="taxonomic scope" value="Eukaryota"/>
</dbReference>
<dbReference type="InParanoid" id="O82088"/>
<dbReference type="Proteomes" id="UP000004994">
    <property type="component" value="Unplaced"/>
</dbReference>
<dbReference type="GO" id="GO:0005737">
    <property type="term" value="C:cytoplasm"/>
    <property type="evidence" value="ECO:0000318"/>
    <property type="project" value="GO_Central"/>
</dbReference>
<dbReference type="GO" id="GO:0005634">
    <property type="term" value="C:nucleus"/>
    <property type="evidence" value="ECO:0000318"/>
    <property type="project" value="GO_Central"/>
</dbReference>
<dbReference type="GO" id="GO:0009910">
    <property type="term" value="P:negative regulation of flower development"/>
    <property type="evidence" value="ECO:0000318"/>
    <property type="project" value="GO_Central"/>
</dbReference>
<dbReference type="GO" id="GO:0010228">
    <property type="term" value="P:vegetative to reproductive phase transition of meristem"/>
    <property type="evidence" value="ECO:0000318"/>
    <property type="project" value="GO_Central"/>
</dbReference>
<dbReference type="CDD" id="cd00866">
    <property type="entry name" value="PEBP_euk"/>
    <property type="match status" value="1"/>
</dbReference>
<dbReference type="FunFam" id="3.90.280.10:FF:000001">
    <property type="entry name" value="Terminal flower 1"/>
    <property type="match status" value="1"/>
</dbReference>
<dbReference type="Gene3D" id="3.90.280.10">
    <property type="entry name" value="PEBP-like"/>
    <property type="match status" value="1"/>
</dbReference>
<dbReference type="InterPro" id="IPR008914">
    <property type="entry name" value="PEBP"/>
</dbReference>
<dbReference type="InterPro" id="IPR036610">
    <property type="entry name" value="PEBP-like_sf"/>
</dbReference>
<dbReference type="InterPro" id="IPR035810">
    <property type="entry name" value="PEBP_euk"/>
</dbReference>
<dbReference type="InterPro" id="IPR001858">
    <property type="entry name" value="Phosphatidylethanolamine-bd_CS"/>
</dbReference>
<dbReference type="PANTHER" id="PTHR11362">
    <property type="entry name" value="PHOSPHATIDYLETHANOLAMINE-BINDING PROTEIN"/>
    <property type="match status" value="1"/>
</dbReference>
<dbReference type="PANTHER" id="PTHR11362:SF48">
    <property type="entry name" value="PROTEIN CENTRORADIALIS-LIKE"/>
    <property type="match status" value="1"/>
</dbReference>
<dbReference type="Pfam" id="PF01161">
    <property type="entry name" value="PBP"/>
    <property type="match status" value="1"/>
</dbReference>
<dbReference type="SUPFAM" id="SSF49777">
    <property type="entry name" value="PEBP-like"/>
    <property type="match status" value="1"/>
</dbReference>
<dbReference type="PROSITE" id="PS01220">
    <property type="entry name" value="PBP"/>
    <property type="match status" value="1"/>
</dbReference>
<evidence type="ECO:0000250" key="1"/>
<evidence type="ECO:0000305" key="2"/>
<sequence length="175" mass="19914">MASKMCEPLVIGRVIGEVVDYFCPSVKMSVVYNNNKHVYNGHEFFPSSVTSKPRVEVHGGDLRSFFTLIMIDPDVPGPSDPYLREHLHWIVTDIPGTTDCSFGREVVGYEMPRPNIGIHRFVFLLFKQKKRQTISSAPVSRDQFSSRKFSEENELGSPVAAVFFNCQRETAARRR</sequence>
<gene>
    <name type="primary">SP</name>
</gene>
<organism>
    <name type="scientific">Solanum lycopersicum</name>
    <name type="common">Tomato</name>
    <name type="synonym">Lycopersicon esculentum</name>
    <dbReference type="NCBI Taxonomy" id="4081"/>
    <lineage>
        <taxon>Eukaryota</taxon>
        <taxon>Viridiplantae</taxon>
        <taxon>Streptophyta</taxon>
        <taxon>Embryophyta</taxon>
        <taxon>Tracheophyta</taxon>
        <taxon>Spermatophyta</taxon>
        <taxon>Magnoliopsida</taxon>
        <taxon>eudicotyledons</taxon>
        <taxon>Gunneridae</taxon>
        <taxon>Pentapetalae</taxon>
        <taxon>asterids</taxon>
        <taxon>lamiids</taxon>
        <taxon>Solanales</taxon>
        <taxon>Solanaceae</taxon>
        <taxon>Solanoideae</taxon>
        <taxon>Solaneae</taxon>
        <taxon>Solanum</taxon>
        <taxon>Solanum subgen. Lycopersicon</taxon>
    </lineage>
</organism>
<protein>
    <recommendedName>
        <fullName>Protein SELF-PRUNING</fullName>
    </recommendedName>
</protein>
<reference key="1">
    <citation type="journal article" date="1998" name="Development">
        <title>The SELF-PRUNING gene of tomato regulates vegetative to reproductive switching of sympodial meristems and is the ortholog of CEN and TFL1.</title>
        <authorList>
            <person name="Pnueli L."/>
            <person name="Carmel-Goren L."/>
            <person name="Hareven D."/>
            <person name="Gutfinger T."/>
            <person name="Alvarez J."/>
            <person name="Ganal M."/>
            <person name="Zamir D."/>
            <person name="Lifschitz E."/>
        </authorList>
    </citation>
    <scope>NUCLEOTIDE SEQUENCE [MRNA]</scope>
</reference>
<feature type="chain" id="PRO_0000204760" description="Protein SELF-PRUNING">
    <location>
        <begin position="1"/>
        <end position="175"/>
    </location>
</feature>
<feature type="sequence variant" description="In SP mutation.">
    <original>P</original>
    <variation>L</variation>
    <location>
        <position position="76"/>
    </location>
</feature>
<proteinExistence type="evidence at transcript level"/>
<comment type="function">
    <text>Not known. In plants homozygous for the recessive allele of the SP gene, sympodial segments develop progressively fewer nodes until the shoot is terminated by two consecutive. inflorescences.</text>
</comment>
<comment type="subcellular location">
    <subcellularLocation>
        <location evidence="1">Cytoplasm</location>
    </subcellularLocation>
</comment>
<comment type="developmental stage">
    <text>Expressed in shoot apices and leaves from very early stages, and later in inflorescence and floral primordia as well.</text>
</comment>
<comment type="similarity">
    <text evidence="2">Belongs to the phosphatidylethanolamine-binding protein family.</text>
</comment>
<keyword id="KW-0963">Cytoplasm</keyword>
<keyword id="KW-1185">Reference proteome</keyword>
<name>SELFP_SOLLC</name>